<proteinExistence type="evidence at protein level"/>
<sequence length="503" mass="55230">MASLLLTSSSMITTSCRSMVLRSGLPIGSSFPSLRLTRPYDKATLFVSCCSAESKKVATSATDLKPIMERRPEYIPNKLPHKNYVRVLDTTLRDGEQSPGAALTPPQKLEIARQLAKLRVDIMEVGFPVSSEEEFEAIKTIAKTVGNEVDEETGYVPVICGIARCKKRDIEATWEALKYAKRPRVMLFTSTSEIHMKYKLKKTKEEVIEMAVNSVKYAKSLGFKDIQFGCEDGGRTEKDFICKILGESIKAGATTVGFADTVGINMPQEFGELVAYVIENTPGADDIVFAIHCHNDLGVATANTISGICAGARQVEVTINGIGERSGNAPLEEVVMALKCRGESLMDGVYTKIDSRQIMATSKMVQEHTGMYVQPHKPIVGDNCFVHESGIHQDGILKNRSTYEILSPEDVGIVKSENSGIVLGKLSGRHAVKDRLKELGYEISDEKFNDIFSRYRELTKDKKRITDADLKALVVNGAEISSEKLNSKGINDLMSSPQISAVV</sequence>
<comment type="function">
    <text evidence="4 5">Determines the side chain length of aliphatic glucosinolate structures. Accepts all the omega-methylthio-2-oxoalkanoic acids needed to form the known C3 to C8 glucosinolates. Also able to convert pyruvate to citramalate, 2-oxoisovalerate to isopropylmalate, 4-methyl-2-oxopentanoate and 5-methyl-2-oxohexanoate for Leu-derived glucosinolates, 3-methyl-2-oxopentanoate for Ile-derived glucosinolates and phenylpyruvate to phenylethylglucosinolate.</text>
</comment>
<comment type="catalytic activity">
    <reaction evidence="5">
        <text>an omega-(methylsulfanyl)-2-oxoalkanoate + acetyl-CoA + H2O = a 2-(omega-methylsulfanyl)alkylmalate + CoA + H(+)</text>
        <dbReference type="Rhea" id="RHEA:50624"/>
        <dbReference type="Rhea" id="RHEA-COMP:12823"/>
        <dbReference type="Rhea" id="RHEA-COMP:12824"/>
        <dbReference type="ChEBI" id="CHEBI:15377"/>
        <dbReference type="ChEBI" id="CHEBI:15378"/>
        <dbReference type="ChEBI" id="CHEBI:57287"/>
        <dbReference type="ChEBI" id="CHEBI:57288"/>
        <dbReference type="ChEBI" id="CHEBI:133493"/>
        <dbReference type="ChEBI" id="CHEBI:133494"/>
        <dbReference type="EC" id="2.3.3.17"/>
    </reaction>
</comment>
<comment type="cofactor">
    <cofactor>
        <name>Mn(2+)</name>
        <dbReference type="ChEBI" id="CHEBI:29035"/>
    </cofactor>
    <text>Manganese or any other divalent metal ion.</text>
</comment>
<comment type="activity regulation">
    <text evidence="5">Not activated by ATP.</text>
</comment>
<comment type="biophysicochemical properties">
    <kinetics>
        <KM evidence="5">932 uM for 4-methylthio-2-oxobutanoic acid</KM>
        <KM evidence="5">476 uM for 5-methylthio-2-oxopentanoic acid</KM>
        <KM evidence="5">463 uM for 6-methylthio-2-oxohexanoic acid</KM>
        <KM evidence="5">253 uM for 8-methylthio-2-oxooctanoic acid</KM>
        <KM evidence="5">81 uM for 9-methylthio-2-oxononanoic acid</KM>
        <KM evidence="5">1 mM for 2-oxoisovalerate</KM>
        <KM evidence="5">8.6 mM for pyruvate</KM>
        <KM evidence="5">2.3 mM for acetyl-CoA</KM>
        <Vmax evidence="5">1448.0 nmol/min/mg enzyme with 4-methylthio-2-oxobutanoic acid as substrate</Vmax>
        <Vmax evidence="5">1495.0 nmol/min/mg enzyme with 5-methylthio-2-oxopentanoic acid as substrate</Vmax>
        <Vmax evidence="5">2869.0 nmol/min/mg enzyme with 6-methylthio-2-oxohexanoic acid as substrate</Vmax>
        <Vmax evidence="5">364.0 nmol/min/mg enzyme with 8-methylthio-2-oxooctanoic acid as substrate</Vmax>
        <Vmax evidence="5">31.0 nmol/min/mg enzyme with 9-methylthio-2-oxononanoic acid as substrate</Vmax>
        <Vmax evidence="5">199.0 nmol/min/mg enzyme with 2-oxoisovalerate as substrate</Vmax>
        <Vmax evidence="5">191.0 nmol/min/mg enzyme with pyruvate as substrate</Vmax>
        <Vmax evidence="5">3344.0 nmol/min/mg enzyme with acetyl-CoA as substrate</Vmax>
    </kinetics>
    <phDependence>
        <text evidence="5">Optimum pH is 8.0.</text>
    </phDependence>
    <temperatureDependence>
        <text evidence="5">Optimum temperature is 32 degrees Celsius.</text>
    </temperatureDependence>
</comment>
<comment type="subcellular location">
    <subcellularLocation>
        <location evidence="5">Plastid</location>
        <location evidence="5">Chloroplast</location>
    </subcellularLocation>
</comment>
<comment type="tissue specificity">
    <text evidence="3 5">Highly expressed in roots, leaves, and siliques. Lower amounts in stems and flowers.</text>
</comment>
<comment type="miscellaneous">
    <text>Constitutes an insect resistance quantitative trait locus, caused by variation in glucosinolate profiles conferred by polymorphism of MAM alleles.</text>
</comment>
<comment type="similarity">
    <text evidence="6">Belongs to the alpha-IPM synthase/homocitrate synthase family.</text>
</comment>
<keyword id="KW-0150">Chloroplast</keyword>
<keyword id="KW-0934">Plastid</keyword>
<keyword id="KW-1185">Reference proteome</keyword>
<keyword id="KW-0808">Transferase</keyword>
<keyword id="KW-0809">Transit peptide</keyword>
<gene>
    <name type="primary">MAM3</name>
    <name type="synonym">IMS2</name>
    <name type="synonym">IPMS_AT1</name>
    <name type="synonym">MAM-L</name>
    <name type="synonym">MAM1</name>
    <name type="ordered locus">At5g23020</name>
    <name type="ORF">MYJ24.1</name>
</gene>
<reference key="1">
    <citation type="submission" date="2001-12" db="EMBL/GenBank/DDBJ databases">
        <title>Molecular cloning and sequencing of a full length cDNA clone encodign 2-isopropylamalate synthase of Arabidopsis thaliana and its expression analysis.</title>
        <authorList>
            <person name="Pistelli L."/>
            <person name="De Bellis L."/>
            <person name="Alpi A."/>
        </authorList>
    </citation>
    <scope>NUCLEOTIDE SEQUENCE [MRNA]</scope>
    <source>
        <strain>cv. Columbia</strain>
    </source>
</reference>
<reference key="2">
    <citation type="journal article" date="2002" name="J. Exp. Bot.">
        <title>Isolation and expression analysis of the isopropylmalate synthase gene family of Arabidopsis thaliana.</title>
        <authorList>
            <person name="Junk D.J."/>
            <person name="Mourad G.S."/>
        </authorList>
    </citation>
    <scope>NUCLEOTIDE SEQUENCE [MRNA]</scope>
    <scope>TISSUE SPECIFICITY</scope>
    <scope>ISOPROPYLMALATE SYNTHASE ACTIVITY</scope>
</reference>
<reference key="3">
    <citation type="journal article" date="2003" name="Proc. Natl. Acad. Sci. U.S.A.">
        <title>Evolutionary dynamics of an Arabidopsis insect resistance quantitative trait locus.</title>
        <authorList>
            <person name="Kroymann J."/>
            <person name="Donnerhacke S."/>
            <person name="Schnabelrauch D."/>
            <person name="Mitchell-Olds T."/>
        </authorList>
    </citation>
    <scope>NUCLEOTIDE SEQUENCE [GENOMIC DNA / MRNA]</scope>
    <scope>VARIANTS</scope>
    <source>
        <strain>cv. Aa-0</strain>
        <strain>cv. Ag-0</strain>
        <strain>cv. Bl-0</strain>
        <strain>cv. Di-G</strain>
        <strain>cv. Ema-1</strain>
        <strain>cv. Gy-0</strain>
        <strain>cv. Ka-0</strain>
        <strain>cv. Landsberg erecta</strain>
        <strain>cv. Lip-0</strain>
        <strain>cv. Mt-0</strain>
        <strain>cv. No-0</strain>
        <strain>cv. Petergof</strain>
        <strain>cv. Pla-0</strain>
        <strain>cv. Sei-0</strain>
        <strain>cv. Sorbo</strain>
        <strain>cv. Tsu-1</strain>
        <strain>cv. Wl-0</strain>
    </source>
</reference>
<reference key="4">
    <citation type="journal article" date="1997" name="DNA Res.">
        <title>Structural analysis of Arabidopsis thaliana chromosome 5. II. Sequence features of the regions of 1,044,062 bp covered by thirteen physically assigned P1 clones.</title>
        <authorList>
            <person name="Kotani H."/>
            <person name="Nakamura Y."/>
            <person name="Sato S."/>
            <person name="Kaneko T."/>
            <person name="Asamizu E."/>
            <person name="Miyajima N."/>
            <person name="Tabata S."/>
        </authorList>
    </citation>
    <scope>NUCLEOTIDE SEQUENCE [LARGE SCALE GENOMIC DNA]</scope>
    <source>
        <strain>cv. Columbia</strain>
    </source>
</reference>
<reference key="5">
    <citation type="journal article" date="2017" name="Plant J.">
        <title>Araport11: a complete reannotation of the Arabidopsis thaliana reference genome.</title>
        <authorList>
            <person name="Cheng C.Y."/>
            <person name="Krishnakumar V."/>
            <person name="Chan A.P."/>
            <person name="Thibaud-Nissen F."/>
            <person name="Schobel S."/>
            <person name="Town C.D."/>
        </authorList>
    </citation>
    <scope>GENOME REANNOTATION</scope>
    <source>
        <strain>cv. Columbia</strain>
    </source>
</reference>
<reference key="6">
    <citation type="journal article" date="2003" name="Science">
        <title>Empirical analysis of transcriptional activity in the Arabidopsis genome.</title>
        <authorList>
            <person name="Yamada K."/>
            <person name="Lim J."/>
            <person name="Dale J.M."/>
            <person name="Chen H."/>
            <person name="Shinn P."/>
            <person name="Palm C.J."/>
            <person name="Southwick A.M."/>
            <person name="Wu H.C."/>
            <person name="Kim C.J."/>
            <person name="Nguyen M."/>
            <person name="Pham P.K."/>
            <person name="Cheuk R.F."/>
            <person name="Karlin-Newmann G."/>
            <person name="Liu S.X."/>
            <person name="Lam B."/>
            <person name="Sakano H."/>
            <person name="Wu T."/>
            <person name="Yu G."/>
            <person name="Miranda M."/>
            <person name="Quach H.L."/>
            <person name="Tripp M."/>
            <person name="Chang C.H."/>
            <person name="Lee J.M."/>
            <person name="Toriumi M.J."/>
            <person name="Chan M.M."/>
            <person name="Tang C.C."/>
            <person name="Onodera C.S."/>
            <person name="Deng J.M."/>
            <person name="Akiyama K."/>
            <person name="Ansari Y."/>
            <person name="Arakawa T."/>
            <person name="Banh J."/>
            <person name="Banno F."/>
            <person name="Bowser L."/>
            <person name="Brooks S.Y."/>
            <person name="Carninci P."/>
            <person name="Chao Q."/>
            <person name="Choy N."/>
            <person name="Enju A."/>
            <person name="Goldsmith A.D."/>
            <person name="Gurjal M."/>
            <person name="Hansen N.F."/>
            <person name="Hayashizaki Y."/>
            <person name="Johnson-Hopson C."/>
            <person name="Hsuan V.W."/>
            <person name="Iida K."/>
            <person name="Karnes M."/>
            <person name="Khan S."/>
            <person name="Koesema E."/>
            <person name="Ishida J."/>
            <person name="Jiang P.X."/>
            <person name="Jones T."/>
            <person name="Kawai J."/>
            <person name="Kamiya A."/>
            <person name="Meyers C."/>
            <person name="Nakajima M."/>
            <person name="Narusaka M."/>
            <person name="Seki M."/>
            <person name="Sakurai T."/>
            <person name="Satou M."/>
            <person name="Tamse R."/>
            <person name="Vaysberg M."/>
            <person name="Wallender E.K."/>
            <person name="Wong C."/>
            <person name="Yamamura Y."/>
            <person name="Yuan S."/>
            <person name="Shinozaki K."/>
            <person name="Davis R.W."/>
            <person name="Theologis A."/>
            <person name="Ecker J.R."/>
        </authorList>
    </citation>
    <scope>NUCLEOTIDE SEQUENCE [LARGE SCALE MRNA]</scope>
    <source>
        <strain>cv. Columbia</strain>
    </source>
</reference>
<reference key="7">
    <citation type="journal article" date="2000" name="Theor. Appl. Genet.">
        <title>Alpha-keto acid elongation and glucosinolate biosynthesis in Arabidopsis thaliana.</title>
        <authorList>
            <person name="Campos de Quiros H."/>
            <person name="Magrath R."/>
            <person name="McCallum D."/>
            <person name="Kroymann J."/>
            <person name="Scnabelrauch D."/>
            <person name="Mitchell-Olds T."/>
            <person name="Mithen R."/>
        </authorList>
        <dbReference type="AGRICOLA" id="IND22089415"/>
    </citation>
    <scope>IDENTIFICATION</scope>
</reference>
<reference key="8">
    <citation type="journal article" date="2004" name="Plant Physiol.">
        <title>Glucosinolate and amino acid biosynthesis in Arabidopsis.</title>
        <authorList>
            <person name="Field B."/>
            <person name="Cardon G."/>
            <person name="Traka M."/>
            <person name="Botterman J."/>
            <person name="Vancanneyt G."/>
            <person name="Mithen R."/>
        </authorList>
    </citation>
    <scope>FUNCTION</scope>
</reference>
<reference key="9">
    <citation type="journal article" date="2007" name="Plant Physiol.">
        <title>MAM3 catalyzes the formation of all aliphatic glucosinolate chain lengths in Arabidopsis.</title>
        <authorList>
            <person name="Textor S."/>
            <person name="de Kraker J.-W."/>
            <person name="Hause B."/>
            <person name="Gershenzon J."/>
            <person name="Tokuhisa J.G."/>
        </authorList>
    </citation>
    <scope>FUNCTION</scope>
    <scope>CATALYTIC ACTIVITY</scope>
    <scope>BIOPHYSICOCHEMICAL PROPERTIES</scope>
    <scope>ACTIVITY REGULATION</scope>
    <scope>SUBCELLULAR LOCATION</scope>
    <scope>TISSUE SPECIFICITY</scope>
    <scope>MUTAGENESIS OF GLY-263</scope>
    <scope>NOMENCLATURE</scope>
    <source>
        <strain>cv. Columbia</strain>
    </source>
</reference>
<dbReference type="EC" id="2.3.3.17" evidence="5"/>
<dbReference type="EMBL" id="AJ421793">
    <property type="protein sequence ID" value="CAD18966.1"/>
    <property type="molecule type" value="mRNA"/>
</dbReference>
<dbReference type="EMBL" id="AF327648">
    <property type="protein sequence ID" value="AAG52883.1"/>
    <property type="molecule type" value="mRNA"/>
</dbReference>
<dbReference type="EMBL" id="AJ486937">
    <property type="protein sequence ID" value="CAD31195.1"/>
    <property type="molecule type" value="mRNA"/>
</dbReference>
<dbReference type="EMBL" id="AJ486938">
    <property type="protein sequence ID" value="CAD31196.1"/>
    <property type="molecule type" value="mRNA"/>
</dbReference>
<dbReference type="EMBL" id="AJ486939">
    <property type="protein sequence ID" value="CAD31197.1"/>
    <property type="molecule type" value="mRNA"/>
</dbReference>
<dbReference type="EMBL" id="AJ486940">
    <property type="protein sequence ID" value="CAD31198.1"/>
    <property type="molecule type" value="mRNA"/>
</dbReference>
<dbReference type="EMBL" id="AJ486941">
    <property type="protein sequence ID" value="CAD31199.1"/>
    <property type="molecule type" value="mRNA"/>
</dbReference>
<dbReference type="EMBL" id="AJ486942">
    <property type="protein sequence ID" value="CAD31200.1"/>
    <property type="molecule type" value="mRNA"/>
</dbReference>
<dbReference type="EMBL" id="AJ486943">
    <property type="protein sequence ID" value="CAD31201.1"/>
    <property type="molecule type" value="mRNA"/>
</dbReference>
<dbReference type="EMBL" id="AJ486944">
    <property type="protein sequence ID" value="CAD31202.1"/>
    <property type="molecule type" value="mRNA"/>
</dbReference>
<dbReference type="EMBL" id="AJ486945">
    <property type="protein sequence ID" value="CAD31203.1"/>
    <property type="molecule type" value="mRNA"/>
</dbReference>
<dbReference type="EMBL" id="AJ486946">
    <property type="protein sequence ID" value="CAD31204.1"/>
    <property type="molecule type" value="mRNA"/>
</dbReference>
<dbReference type="EMBL" id="AJ486947">
    <property type="protein sequence ID" value="CAD31205.1"/>
    <property type="molecule type" value="mRNA"/>
</dbReference>
<dbReference type="EMBL" id="AJ486948">
    <property type="protein sequence ID" value="CAD31206.1"/>
    <property type="molecule type" value="mRNA"/>
</dbReference>
<dbReference type="EMBL" id="AJ486949">
    <property type="protein sequence ID" value="CAD31207.1"/>
    <property type="molecule type" value="mRNA"/>
</dbReference>
<dbReference type="EMBL" id="AJ486950">
    <property type="protein sequence ID" value="CAD31208.1"/>
    <property type="molecule type" value="mRNA"/>
</dbReference>
<dbReference type="EMBL" id="AJ486951">
    <property type="protein sequence ID" value="CAD31209.1"/>
    <property type="molecule type" value="mRNA"/>
</dbReference>
<dbReference type="EMBL" id="AJ486952">
    <property type="protein sequence ID" value="CAD31210.1"/>
    <property type="molecule type" value="mRNA"/>
</dbReference>
<dbReference type="EMBL" id="AJ486953">
    <property type="protein sequence ID" value="CAD31211.1"/>
    <property type="molecule type" value="mRNA"/>
</dbReference>
<dbReference type="EMBL" id="AJ131518">
    <property type="protein sequence ID" value="CAC80103.1"/>
    <property type="molecule type" value="mRNA"/>
</dbReference>
<dbReference type="EMBL" id="AM180570">
    <property type="protein sequence ID" value="CAJ55502.1"/>
    <property type="molecule type" value="Genomic_DNA"/>
</dbReference>
<dbReference type="EMBL" id="AM180573">
    <property type="protein sequence ID" value="CAJ55505.1"/>
    <property type="molecule type" value="Genomic_DNA"/>
</dbReference>
<dbReference type="EMBL" id="AB006708">
    <property type="protein sequence ID" value="BAB09819.1"/>
    <property type="molecule type" value="Genomic_DNA"/>
</dbReference>
<dbReference type="EMBL" id="CP002688">
    <property type="protein sequence ID" value="AED93108.1"/>
    <property type="molecule type" value="Genomic_DNA"/>
</dbReference>
<dbReference type="EMBL" id="AY099549">
    <property type="protein sequence ID" value="AAM20401.1"/>
    <property type="molecule type" value="mRNA"/>
</dbReference>
<dbReference type="EMBL" id="BT008874">
    <property type="protein sequence ID" value="AAP68313.1"/>
    <property type="molecule type" value="mRNA"/>
</dbReference>
<dbReference type="RefSeq" id="NP_197693.1">
    <property type="nucleotide sequence ID" value="NM_122208.4"/>
</dbReference>
<dbReference type="SMR" id="Q9FN52"/>
<dbReference type="FunCoup" id="Q9FN52">
    <property type="interactions" value="385"/>
</dbReference>
<dbReference type="STRING" id="3702.Q9FN52"/>
<dbReference type="iPTMnet" id="Q9FN52"/>
<dbReference type="PaxDb" id="3702-AT5G23020.1"/>
<dbReference type="ProteomicsDB" id="238866"/>
<dbReference type="EnsemblPlants" id="AT5G23020.1">
    <property type="protein sequence ID" value="AT5G23020.1"/>
    <property type="gene ID" value="AT5G23020"/>
</dbReference>
<dbReference type="GeneID" id="832366"/>
<dbReference type="Gramene" id="AT5G23020.1">
    <property type="protein sequence ID" value="AT5G23020.1"/>
    <property type="gene ID" value="AT5G23020"/>
</dbReference>
<dbReference type="KEGG" id="ath:AT5G23020"/>
<dbReference type="Araport" id="AT5G23020"/>
<dbReference type="TAIR" id="AT5G23020">
    <property type="gene designation" value="IMS2"/>
</dbReference>
<dbReference type="eggNOG" id="KOG2367">
    <property type="taxonomic scope" value="Eukaryota"/>
</dbReference>
<dbReference type="HOGENOM" id="CLU_022158_3_1_1"/>
<dbReference type="InParanoid" id="Q9FN52"/>
<dbReference type="OMA" id="SCEDTFR"/>
<dbReference type="PhylomeDB" id="Q9FN52"/>
<dbReference type="BioCyc" id="MetaCyc:AT5G23020-MONOMER"/>
<dbReference type="BRENDA" id="2.3.3.13">
    <property type="organism ID" value="399"/>
</dbReference>
<dbReference type="BRENDA" id="2.3.3.17">
    <property type="organism ID" value="399"/>
</dbReference>
<dbReference type="PRO" id="PR:Q9FN52"/>
<dbReference type="Proteomes" id="UP000006548">
    <property type="component" value="Chromosome 5"/>
</dbReference>
<dbReference type="ExpressionAtlas" id="Q9FN52">
    <property type="expression patterns" value="baseline and differential"/>
</dbReference>
<dbReference type="GO" id="GO:0009507">
    <property type="term" value="C:chloroplast"/>
    <property type="evidence" value="ECO:0000314"/>
    <property type="project" value="TAIR"/>
</dbReference>
<dbReference type="GO" id="GO:0003852">
    <property type="term" value="F:2-isopropylmalate synthase activity"/>
    <property type="evidence" value="ECO:0000303"/>
    <property type="project" value="TAIR"/>
</dbReference>
<dbReference type="GO" id="GO:0010177">
    <property type="term" value="F:methylthioalkylmalate synthase activity"/>
    <property type="evidence" value="ECO:0000314"/>
    <property type="project" value="TAIR"/>
</dbReference>
<dbReference type="GO" id="GO:0019761">
    <property type="term" value="P:glucosinolate biosynthetic process"/>
    <property type="evidence" value="ECO:0000314"/>
    <property type="project" value="TAIR"/>
</dbReference>
<dbReference type="GO" id="GO:0009098">
    <property type="term" value="P:L-leucine biosynthetic process"/>
    <property type="evidence" value="ECO:0000304"/>
    <property type="project" value="TAIR"/>
</dbReference>
<dbReference type="CDD" id="cd07940">
    <property type="entry name" value="DRE_TIM_IPMS"/>
    <property type="match status" value="1"/>
</dbReference>
<dbReference type="FunFam" id="1.10.238.260:FF:000001">
    <property type="entry name" value="2-isopropylmalate synthase"/>
    <property type="match status" value="1"/>
</dbReference>
<dbReference type="FunFam" id="3.20.20.70:FF:000010">
    <property type="entry name" value="2-isopropylmalate synthase"/>
    <property type="match status" value="1"/>
</dbReference>
<dbReference type="Gene3D" id="1.10.238.260">
    <property type="match status" value="1"/>
</dbReference>
<dbReference type="Gene3D" id="3.20.20.70">
    <property type="entry name" value="Aldolase class I"/>
    <property type="match status" value="1"/>
</dbReference>
<dbReference type="InterPro" id="IPR050073">
    <property type="entry name" value="2-IPM_HCS-like"/>
</dbReference>
<dbReference type="InterPro" id="IPR002034">
    <property type="entry name" value="AIPM/Hcit_synth_CS"/>
</dbReference>
<dbReference type="InterPro" id="IPR013785">
    <property type="entry name" value="Aldolase_TIM"/>
</dbReference>
<dbReference type="InterPro" id="IPR054691">
    <property type="entry name" value="LeuA/HCS_post-cat"/>
</dbReference>
<dbReference type="InterPro" id="IPR000891">
    <property type="entry name" value="PYR_CT"/>
</dbReference>
<dbReference type="NCBIfam" id="NF002086">
    <property type="entry name" value="PRK00915.1-3"/>
    <property type="match status" value="1"/>
</dbReference>
<dbReference type="PANTHER" id="PTHR10277">
    <property type="entry name" value="HOMOCITRATE SYNTHASE-RELATED"/>
    <property type="match status" value="1"/>
</dbReference>
<dbReference type="PANTHER" id="PTHR10277:SF60">
    <property type="entry name" value="METHYLTHIOALKYLMALATE SYNTHASE 1, CHLOROPLASTIC-RELATED"/>
    <property type="match status" value="1"/>
</dbReference>
<dbReference type="Pfam" id="PF22617">
    <property type="entry name" value="HCS_D2"/>
    <property type="match status" value="1"/>
</dbReference>
<dbReference type="Pfam" id="PF00682">
    <property type="entry name" value="HMGL-like"/>
    <property type="match status" value="1"/>
</dbReference>
<dbReference type="SUPFAM" id="SSF51569">
    <property type="entry name" value="Aldolase"/>
    <property type="match status" value="1"/>
</dbReference>
<dbReference type="PROSITE" id="PS00815">
    <property type="entry name" value="AIPM_HOMOCIT_SYNTH_1"/>
    <property type="match status" value="1"/>
</dbReference>
<dbReference type="PROSITE" id="PS00816">
    <property type="entry name" value="AIPM_HOMOCIT_SYNTH_2"/>
    <property type="match status" value="1"/>
</dbReference>
<dbReference type="PROSITE" id="PS50991">
    <property type="entry name" value="PYR_CT"/>
    <property type="match status" value="1"/>
</dbReference>
<evidence type="ECO:0000255" key="1"/>
<evidence type="ECO:0000255" key="2">
    <source>
        <dbReference type="PROSITE-ProRule" id="PRU01151"/>
    </source>
</evidence>
<evidence type="ECO:0000269" key="3">
    <source>
    </source>
</evidence>
<evidence type="ECO:0000269" key="4">
    <source>
    </source>
</evidence>
<evidence type="ECO:0000269" key="5">
    <source>
    </source>
</evidence>
<evidence type="ECO:0000305" key="6"/>
<protein>
    <recommendedName>
        <fullName>Methylthioalkylmalate synthase 3, chloroplastic</fullName>
        <ecNumber evidence="5">2.3.3.17</ecNumber>
    </recommendedName>
    <alternativeName>
        <fullName>2-isopropylmalate synthase 2</fullName>
    </alternativeName>
    <alternativeName>
        <fullName>Methylthioalkylmalate synthase-like</fullName>
    </alternativeName>
</protein>
<feature type="transit peptide" description="Chloroplast" evidence="1">
    <location>
        <begin position="1"/>
        <end position="51"/>
    </location>
</feature>
<feature type="chain" id="PRO_0000315842" description="Methylthioalkylmalate synthase 3, chloroplastic">
    <location>
        <begin position="52"/>
        <end position="503"/>
    </location>
</feature>
<feature type="domain" description="Pyruvate carboxyltransferase" evidence="2">
    <location>
        <begin position="85"/>
        <end position="359"/>
    </location>
</feature>
<feature type="sequence variant" description="In strain: cv. Sorbo.">
    <original>S</original>
    <variation>I</variation>
    <location>
        <position position="10"/>
    </location>
</feature>
<feature type="sequence variant" description="In strain: cv. Bl-0, cv. Di-G, cv. Ema-1, cv. Ka-0, cv. Landsberg erecta, cv. Lip-0, cv. No-0, cv. Petergof, cv. Sei-0, cv. Sorbo, cv. Tsu-1, cv. Wl-0 and cv.Pla-0.">
    <original>R</original>
    <variation>P</variation>
    <location>
        <position position="17"/>
    </location>
</feature>
<feature type="sequence variant" description="In strain: cv. Sorbo.">
    <original>G</original>
    <variation>A</variation>
    <location>
        <position position="24"/>
    </location>
</feature>
<feature type="sequence variant" description="In strain: cv. Sorbo.">
    <original>F</original>
    <variation>L</variation>
    <location>
        <position position="46"/>
    </location>
</feature>
<feature type="sequence variant" description="In strain: cv. Ema-1.">
    <original>F</original>
    <variation>S</variation>
    <location>
        <position position="46"/>
    </location>
</feature>
<feature type="sequence variant" description="In strain: cv. Bl-0, cv. Di-G, cv. Landsberg erecta and cv. Petergof.">
    <original>M</original>
    <variation>V</variation>
    <location>
        <position position="68"/>
    </location>
</feature>
<feature type="sequence variant" description="In strain: cv. Ka-0, cv. Lip-0, cv. No-0, cv. Sei-0, cv. Tsu-1 and cv. Wl-0.">
    <original>V</original>
    <variation>A</variation>
    <location>
        <position position="156"/>
    </location>
</feature>
<feature type="sequence variant" description="In strain: cv. Bl-0, cv. Di-G, cv. Ka-0, cv. Landsberg erecta, cv. Lip-0, cv. No-0, cv. Petergof, cv. Sei-0, cv. Tsu-1 and cv. Wl-0.">
    <original>I</original>
    <variation>L</variation>
    <location>
        <position position="241"/>
    </location>
</feature>
<feature type="mutagenesis site" description="In gsm2-1; loss of activity and lack of C6, C7 and C8 aliphatic glucosinolates." evidence="5">
    <original>G</original>
    <variation>E</variation>
    <location>
        <position position="263"/>
    </location>
</feature>
<feature type="sequence conflict" description="In Ref. 1; CAD18966." evidence="6" ref="1">
    <original>V</original>
    <variation>A</variation>
    <location>
        <position position="156"/>
    </location>
</feature>
<feature type="sequence conflict" description="In Ref. 2; AAG52883." evidence="6" ref="2">
    <original>C</original>
    <variation>S</variation>
    <location>
        <position position="160"/>
    </location>
</feature>
<feature type="sequence conflict" description="In Ref. 1; CAD18966." evidence="6" ref="1">
    <original>I</original>
    <variation>L</variation>
    <location>
        <position position="241"/>
    </location>
</feature>
<feature type="sequence conflict" description="In Ref. 1; CAD18966." evidence="6" ref="1">
    <original>GR</original>
    <variation>DV</variation>
    <location>
        <begin position="428"/>
        <end position="429"/>
    </location>
</feature>
<name>MAM3_ARATH</name>
<accession>Q9FN52</accession>
<accession>Q70YR5</accession>
<accession>Q70YR9</accession>
<accession>Q70YS1</accession>
<accession>Q70YS3</accession>
<accession>Q8VX05</accession>
<accession>Q8VX46</accession>
<accession>Q9C5X5</accession>
<organism>
    <name type="scientific">Arabidopsis thaliana</name>
    <name type="common">Mouse-ear cress</name>
    <dbReference type="NCBI Taxonomy" id="3702"/>
    <lineage>
        <taxon>Eukaryota</taxon>
        <taxon>Viridiplantae</taxon>
        <taxon>Streptophyta</taxon>
        <taxon>Embryophyta</taxon>
        <taxon>Tracheophyta</taxon>
        <taxon>Spermatophyta</taxon>
        <taxon>Magnoliopsida</taxon>
        <taxon>eudicotyledons</taxon>
        <taxon>Gunneridae</taxon>
        <taxon>Pentapetalae</taxon>
        <taxon>rosids</taxon>
        <taxon>malvids</taxon>
        <taxon>Brassicales</taxon>
        <taxon>Brassicaceae</taxon>
        <taxon>Camelineae</taxon>
        <taxon>Arabidopsis</taxon>
    </lineage>
</organism>